<organism>
    <name type="scientific">Pyrobaculum arsenaticum (strain DSM 13514 / JCM 11321 / PZ6)</name>
    <dbReference type="NCBI Taxonomy" id="340102"/>
    <lineage>
        <taxon>Archaea</taxon>
        <taxon>Thermoproteota</taxon>
        <taxon>Thermoprotei</taxon>
        <taxon>Thermoproteales</taxon>
        <taxon>Thermoproteaceae</taxon>
        <taxon>Pyrobaculum</taxon>
    </lineage>
</organism>
<evidence type="ECO:0000255" key="1">
    <source>
        <dbReference type="HAMAP-Rule" id="MF_00282"/>
    </source>
</evidence>
<protein>
    <recommendedName>
        <fullName evidence="1">Phenylalanine--tRNA ligase alpha subunit</fullName>
        <ecNumber evidence="1">6.1.1.20</ecNumber>
    </recommendedName>
    <alternativeName>
        <fullName evidence="1">Phenylalanyl-tRNA synthetase alpha subunit</fullName>
        <shortName evidence="1">PheRS</shortName>
    </alternativeName>
</protein>
<gene>
    <name evidence="1" type="primary">pheS</name>
    <name type="ordered locus">Pars_0400</name>
</gene>
<keyword id="KW-0030">Aminoacyl-tRNA synthetase</keyword>
<keyword id="KW-0067">ATP-binding</keyword>
<keyword id="KW-0963">Cytoplasm</keyword>
<keyword id="KW-0436">Ligase</keyword>
<keyword id="KW-0460">Magnesium</keyword>
<keyword id="KW-0479">Metal-binding</keyword>
<keyword id="KW-0547">Nucleotide-binding</keyword>
<keyword id="KW-0648">Protein biosynthesis</keyword>
<proteinExistence type="inferred from homology"/>
<sequence length="488" mass="55804">MLVLHPALYEIIVRARDWRLLDEVAKELGMQAESLMRYVEEGRAKGVLQVEKKVVEVYELTEEGRRRAAEGLPEYNFLKSATCDGGRCVVSLSHPEAGVALANLAKFGVRPRGGVVELDEETYRKILSAVEEKQRYLSALEGAPRDVLQEFARRRIVRRVERTLIYVKAAVPPESVRPAEVKTAITSADIATGRWRTYLLKPFDLGVEPPEYPAPVPHFFNEFLDYVREVMIGLGFEEVRGPVLEVEFWNFDALFQAQDHPAREVHDTFYIRWEGPIEAPPEHLLEAVGRVHEEKWRYKWSREKALNPVLRTQTTAVTIRALAERGDGEYKVFTIGRVFRPEKLDPKHSMEFHQLDGIVVGPGLTFKHLLGQLEQIAKALGMTRVRFRPAYFPFTSPSVEVYAEHPKLGWVEFGGAGIFRPEVTEPLGVRKSRVLAWGWGLDRIAMILLGIDDIRELFTKDPEKLREYYARWVKYRSATGSTGKSYTL</sequence>
<feature type="chain" id="PRO_1000007667" description="Phenylalanine--tRNA ligase alpha subunit">
    <location>
        <begin position="1"/>
        <end position="488"/>
    </location>
</feature>
<feature type="binding site" evidence="1">
    <location>
        <position position="315"/>
    </location>
    <ligand>
        <name>L-phenylalanine</name>
        <dbReference type="ChEBI" id="CHEBI:58095"/>
    </ligand>
</feature>
<feature type="binding site" evidence="1">
    <location>
        <begin position="354"/>
        <end position="356"/>
    </location>
    <ligand>
        <name>L-phenylalanine</name>
        <dbReference type="ChEBI" id="CHEBI:58095"/>
    </ligand>
</feature>
<feature type="binding site" evidence="1">
    <location>
        <position position="394"/>
    </location>
    <ligand>
        <name>L-phenylalanine</name>
        <dbReference type="ChEBI" id="CHEBI:58095"/>
    </ligand>
</feature>
<feature type="binding site" evidence="1">
    <location>
        <position position="419"/>
    </location>
    <ligand>
        <name>L-phenylalanine</name>
        <dbReference type="ChEBI" id="CHEBI:58095"/>
    </ligand>
</feature>
<accession>A4WHY5</accession>
<name>SYFA_PYRAR</name>
<dbReference type="EC" id="6.1.1.20" evidence="1"/>
<dbReference type="EMBL" id="CP000660">
    <property type="protein sequence ID" value="ABP50002.1"/>
    <property type="molecule type" value="Genomic_DNA"/>
</dbReference>
<dbReference type="RefSeq" id="WP_011899909.1">
    <property type="nucleotide sequence ID" value="NC_009376.1"/>
</dbReference>
<dbReference type="SMR" id="A4WHY5"/>
<dbReference type="STRING" id="340102.Pars_0400"/>
<dbReference type="GeneID" id="5054207"/>
<dbReference type="KEGG" id="pas:Pars_0400"/>
<dbReference type="HOGENOM" id="CLU_025086_2_2_2"/>
<dbReference type="OrthoDB" id="372178at2157"/>
<dbReference type="PhylomeDB" id="A4WHY5"/>
<dbReference type="Proteomes" id="UP000001567">
    <property type="component" value="Chromosome"/>
</dbReference>
<dbReference type="GO" id="GO:0005737">
    <property type="term" value="C:cytoplasm"/>
    <property type="evidence" value="ECO:0007669"/>
    <property type="project" value="UniProtKB-SubCell"/>
</dbReference>
<dbReference type="GO" id="GO:0005524">
    <property type="term" value="F:ATP binding"/>
    <property type="evidence" value="ECO:0007669"/>
    <property type="project" value="UniProtKB-UniRule"/>
</dbReference>
<dbReference type="GO" id="GO:0000287">
    <property type="term" value="F:magnesium ion binding"/>
    <property type="evidence" value="ECO:0007669"/>
    <property type="project" value="UniProtKB-UniRule"/>
</dbReference>
<dbReference type="GO" id="GO:0004826">
    <property type="term" value="F:phenylalanine-tRNA ligase activity"/>
    <property type="evidence" value="ECO:0007669"/>
    <property type="project" value="UniProtKB-UniRule"/>
</dbReference>
<dbReference type="GO" id="GO:0000049">
    <property type="term" value="F:tRNA binding"/>
    <property type="evidence" value="ECO:0007669"/>
    <property type="project" value="InterPro"/>
</dbReference>
<dbReference type="GO" id="GO:0006432">
    <property type="term" value="P:phenylalanyl-tRNA aminoacylation"/>
    <property type="evidence" value="ECO:0007669"/>
    <property type="project" value="UniProtKB-UniRule"/>
</dbReference>
<dbReference type="CDD" id="cd00496">
    <property type="entry name" value="PheRS_alpha_core"/>
    <property type="match status" value="1"/>
</dbReference>
<dbReference type="Gene3D" id="1.10.10.2320">
    <property type="match status" value="1"/>
</dbReference>
<dbReference type="Gene3D" id="1.10.10.2330">
    <property type="match status" value="1"/>
</dbReference>
<dbReference type="Gene3D" id="3.30.1370.240">
    <property type="match status" value="1"/>
</dbReference>
<dbReference type="Gene3D" id="3.30.930.10">
    <property type="entry name" value="Bira Bifunctional Protein, Domain 2"/>
    <property type="match status" value="1"/>
</dbReference>
<dbReference type="HAMAP" id="MF_00282">
    <property type="entry name" value="Phe_tRNA_synth_alpha2"/>
    <property type="match status" value="1"/>
</dbReference>
<dbReference type="InterPro" id="IPR006195">
    <property type="entry name" value="aa-tRNA-synth_II"/>
</dbReference>
<dbReference type="InterPro" id="IPR045864">
    <property type="entry name" value="aa-tRNA-synth_II/BPL/LPL"/>
</dbReference>
<dbReference type="InterPro" id="IPR004529">
    <property type="entry name" value="Phe-tRNA-synth_IIc_asu"/>
</dbReference>
<dbReference type="InterPro" id="IPR022917">
    <property type="entry name" value="Phe_tRNA_ligase_alpha_bac/arc"/>
</dbReference>
<dbReference type="InterPro" id="IPR002319">
    <property type="entry name" value="Phenylalanyl-tRNA_Synthase"/>
</dbReference>
<dbReference type="NCBIfam" id="TIGR00468">
    <property type="entry name" value="pheS"/>
    <property type="match status" value="1"/>
</dbReference>
<dbReference type="NCBIfam" id="NF003210">
    <property type="entry name" value="PRK04172.1"/>
    <property type="match status" value="1"/>
</dbReference>
<dbReference type="PANTHER" id="PTHR11538:SF40">
    <property type="entry name" value="PHENYLALANINE--TRNA LIGASE ALPHA SUBUNIT"/>
    <property type="match status" value="1"/>
</dbReference>
<dbReference type="PANTHER" id="PTHR11538">
    <property type="entry name" value="PHENYLALANYL-TRNA SYNTHETASE"/>
    <property type="match status" value="1"/>
</dbReference>
<dbReference type="Pfam" id="PF01409">
    <property type="entry name" value="tRNA-synt_2d"/>
    <property type="match status" value="1"/>
</dbReference>
<dbReference type="SUPFAM" id="SSF55681">
    <property type="entry name" value="Class II aaRS and biotin synthetases"/>
    <property type="match status" value="1"/>
</dbReference>
<dbReference type="PROSITE" id="PS50862">
    <property type="entry name" value="AA_TRNA_LIGASE_II"/>
    <property type="match status" value="1"/>
</dbReference>
<comment type="catalytic activity">
    <reaction evidence="1">
        <text>tRNA(Phe) + L-phenylalanine + ATP = L-phenylalanyl-tRNA(Phe) + AMP + diphosphate + H(+)</text>
        <dbReference type="Rhea" id="RHEA:19413"/>
        <dbReference type="Rhea" id="RHEA-COMP:9668"/>
        <dbReference type="Rhea" id="RHEA-COMP:9699"/>
        <dbReference type="ChEBI" id="CHEBI:15378"/>
        <dbReference type="ChEBI" id="CHEBI:30616"/>
        <dbReference type="ChEBI" id="CHEBI:33019"/>
        <dbReference type="ChEBI" id="CHEBI:58095"/>
        <dbReference type="ChEBI" id="CHEBI:78442"/>
        <dbReference type="ChEBI" id="CHEBI:78531"/>
        <dbReference type="ChEBI" id="CHEBI:456215"/>
        <dbReference type="EC" id="6.1.1.20"/>
    </reaction>
</comment>
<comment type="cofactor">
    <cofactor evidence="1">
        <name>Mg(2+)</name>
        <dbReference type="ChEBI" id="CHEBI:18420"/>
    </cofactor>
    <text evidence="1">Binds 2 magnesium ions per tetramer.</text>
</comment>
<comment type="subunit">
    <text evidence="1">Tetramer of two alpha and two beta subunits.</text>
</comment>
<comment type="subcellular location">
    <subcellularLocation>
        <location evidence="1">Cytoplasm</location>
    </subcellularLocation>
</comment>
<comment type="similarity">
    <text evidence="1">Belongs to the class-II aminoacyl-tRNA synthetase family. Phe-tRNA synthetase alpha subunit type 2 subfamily.</text>
</comment>
<reference key="1">
    <citation type="submission" date="2007-04" db="EMBL/GenBank/DDBJ databases">
        <title>Complete sequence of Pyrobaculum arsenaticum DSM 13514.</title>
        <authorList>
            <consortium name="US DOE Joint Genome Institute"/>
            <person name="Copeland A."/>
            <person name="Lucas S."/>
            <person name="Lapidus A."/>
            <person name="Barry K."/>
            <person name="Glavina del Rio T."/>
            <person name="Dalin E."/>
            <person name="Tice H."/>
            <person name="Pitluck S."/>
            <person name="Chain P."/>
            <person name="Malfatti S."/>
            <person name="Shin M."/>
            <person name="Vergez L."/>
            <person name="Schmutz J."/>
            <person name="Larimer F."/>
            <person name="Land M."/>
            <person name="Hauser L."/>
            <person name="Kyrpides N."/>
            <person name="Mikhailova N."/>
            <person name="Cozen A.E."/>
            <person name="Fitz-Gibbon S.T."/>
            <person name="House C.H."/>
            <person name="Saltikov C."/>
            <person name="Lowe T.M."/>
            <person name="Richardson P."/>
        </authorList>
    </citation>
    <scope>NUCLEOTIDE SEQUENCE [LARGE SCALE GENOMIC DNA]</scope>
    <source>
        <strain>ATCC 700994 / DSM 13514 / JCM 11321 / PZ6</strain>
    </source>
</reference>